<dbReference type="EMBL" id="AJ001692">
    <property type="protein sequence ID" value="CAA04930.1"/>
    <property type="status" value="ALT_FRAME"/>
    <property type="molecule type" value="mRNA"/>
</dbReference>
<dbReference type="EMBL" id="DQ093397">
    <property type="protein sequence ID" value="AAZ83365.1"/>
    <property type="molecule type" value="mRNA"/>
</dbReference>
<dbReference type="EMBL" id="AY293742">
    <property type="protein sequence ID" value="AAQ54583.1"/>
    <property type="molecule type" value="mRNA"/>
</dbReference>
<dbReference type="EMBL" id="AC165951">
    <property type="status" value="NOT_ANNOTATED_CDS"/>
    <property type="molecule type" value="Genomic_DNA"/>
</dbReference>
<dbReference type="EMBL" id="BC139464">
    <property type="protein sequence ID" value="AAI39465.1"/>
    <property type="molecule type" value="mRNA"/>
</dbReference>
<dbReference type="EMBL" id="BC139466">
    <property type="protein sequence ID" value="AAI39467.1"/>
    <property type="molecule type" value="mRNA"/>
</dbReference>
<dbReference type="CCDS" id="CCDS37542.1"/>
<dbReference type="RefSeq" id="NP_067307.2">
    <property type="nucleotide sequence ID" value="NM_021332.2"/>
</dbReference>
<dbReference type="SMR" id="O35659"/>
<dbReference type="BioGRID" id="199950">
    <property type="interactions" value="1"/>
</dbReference>
<dbReference type="FunCoup" id="O35659">
    <property type="interactions" value="1143"/>
</dbReference>
<dbReference type="STRING" id="10090.ENSMUSP00000110221"/>
<dbReference type="BindingDB" id="O35659"/>
<dbReference type="ChEMBL" id="CHEMBL1075290"/>
<dbReference type="DrugCentral" id="O35659"/>
<dbReference type="GuidetoPHARMACOLOGY" id="249"/>
<dbReference type="GlyCosmos" id="O35659">
    <property type="glycosylation" value="3 sites, No reported glycans"/>
</dbReference>
<dbReference type="GlyGen" id="O35659">
    <property type="glycosylation" value="3 sites, 1 N-linked glycan (2 sites)"/>
</dbReference>
<dbReference type="iPTMnet" id="O35659"/>
<dbReference type="PhosphoSitePlus" id="O35659"/>
<dbReference type="PaxDb" id="10090-ENSMUSP00000110221"/>
<dbReference type="ProteomicsDB" id="270995"/>
<dbReference type="Antibodypedia" id="15682">
    <property type="antibodies" value="560 antibodies from 34 providers"/>
</dbReference>
<dbReference type="DNASU" id="14652"/>
<dbReference type="Ensembl" id="ENSMUST00000114574.3">
    <property type="protein sequence ID" value="ENSMUSP00000110221.2"/>
    <property type="gene ID" value="ENSMUSG00000024027.9"/>
</dbReference>
<dbReference type="Ensembl" id="ENSMUST00000236038.2">
    <property type="protein sequence ID" value="ENSMUSP00000157572.2"/>
    <property type="gene ID" value="ENSMUSG00000024027.9"/>
</dbReference>
<dbReference type="GeneID" id="14652"/>
<dbReference type="KEGG" id="mmu:14652"/>
<dbReference type="UCSC" id="uc008bud.1">
    <property type="organism name" value="mouse"/>
</dbReference>
<dbReference type="AGR" id="MGI:99571"/>
<dbReference type="CTD" id="2740"/>
<dbReference type="MGI" id="MGI:99571">
    <property type="gene designation" value="Glp1r"/>
</dbReference>
<dbReference type="VEuPathDB" id="HostDB:ENSMUSG00000024027"/>
<dbReference type="eggNOG" id="KOG4564">
    <property type="taxonomic scope" value="Eukaryota"/>
</dbReference>
<dbReference type="GeneTree" id="ENSGT00940000161009"/>
<dbReference type="HOGENOM" id="CLU_002753_4_0_1"/>
<dbReference type="InParanoid" id="O35659"/>
<dbReference type="OMA" id="CFVNNEK"/>
<dbReference type="OrthoDB" id="5967113at2759"/>
<dbReference type="PhylomeDB" id="O35659"/>
<dbReference type="TreeFam" id="TF315710"/>
<dbReference type="Reactome" id="R-MMU-381676">
    <property type="pathway name" value="Glucagon-like Peptide-1 (GLP1) regulates insulin secretion"/>
</dbReference>
<dbReference type="Reactome" id="R-MMU-418555">
    <property type="pathway name" value="G alpha (s) signalling events"/>
</dbReference>
<dbReference type="Reactome" id="R-MMU-420092">
    <property type="pathway name" value="Glucagon-type ligand receptors"/>
</dbReference>
<dbReference type="BioGRID-ORCS" id="14652">
    <property type="hits" value="8 hits in 81 CRISPR screens"/>
</dbReference>
<dbReference type="PRO" id="PR:O35659"/>
<dbReference type="Proteomes" id="UP000000589">
    <property type="component" value="Chromosome 17"/>
</dbReference>
<dbReference type="RNAct" id="O35659">
    <property type="molecule type" value="protein"/>
</dbReference>
<dbReference type="Bgee" id="ENSMUSG00000024027">
    <property type="expression patterns" value="Expressed in islet of Langerhans and 58 other cell types or tissues"/>
</dbReference>
<dbReference type="GO" id="GO:0005886">
    <property type="term" value="C:plasma membrane"/>
    <property type="evidence" value="ECO:0000250"/>
    <property type="project" value="UniProtKB"/>
</dbReference>
<dbReference type="GO" id="GO:0004967">
    <property type="term" value="F:glucagon receptor activity"/>
    <property type="evidence" value="ECO:0007669"/>
    <property type="project" value="InterPro"/>
</dbReference>
<dbReference type="GO" id="GO:0044508">
    <property type="term" value="F:glucagon-like peptide 1 receptor activity"/>
    <property type="evidence" value="ECO:0000250"/>
    <property type="project" value="UniProtKB"/>
</dbReference>
<dbReference type="GO" id="GO:0038023">
    <property type="term" value="F:signaling receptor activity"/>
    <property type="evidence" value="ECO:0000304"/>
    <property type="project" value="MGI"/>
</dbReference>
<dbReference type="GO" id="GO:0007189">
    <property type="term" value="P:adenylate cyclase-activating G protein-coupled receptor signaling pathway"/>
    <property type="evidence" value="ECO:0000250"/>
    <property type="project" value="UniProtKB"/>
</dbReference>
<dbReference type="GO" id="GO:0007166">
    <property type="term" value="P:cell surface receptor signaling pathway"/>
    <property type="evidence" value="ECO:0007669"/>
    <property type="project" value="InterPro"/>
</dbReference>
<dbReference type="GO" id="GO:0046879">
    <property type="term" value="P:hormone secretion"/>
    <property type="evidence" value="ECO:0000315"/>
    <property type="project" value="MGI"/>
</dbReference>
<dbReference type="GO" id="GO:0007611">
    <property type="term" value="P:learning or memory"/>
    <property type="evidence" value="ECO:0000315"/>
    <property type="project" value="UniProtKB"/>
</dbReference>
<dbReference type="GO" id="GO:0045776">
    <property type="term" value="P:negative regulation of blood pressure"/>
    <property type="evidence" value="ECO:0000315"/>
    <property type="project" value="MGI"/>
</dbReference>
<dbReference type="GO" id="GO:0007218">
    <property type="term" value="P:neuropeptide signaling pathway"/>
    <property type="evidence" value="ECO:0000304"/>
    <property type="project" value="MGI"/>
</dbReference>
<dbReference type="GO" id="GO:0045777">
    <property type="term" value="P:positive regulation of blood pressure"/>
    <property type="evidence" value="ECO:0000314"/>
    <property type="project" value="CACAO"/>
</dbReference>
<dbReference type="GO" id="GO:0007204">
    <property type="term" value="P:positive regulation of cytosolic calcium ion concentration"/>
    <property type="evidence" value="ECO:0007669"/>
    <property type="project" value="Ensembl"/>
</dbReference>
<dbReference type="GO" id="GO:0031204">
    <property type="term" value="P:post-translational protein targeting to membrane, translocation"/>
    <property type="evidence" value="ECO:0000315"/>
    <property type="project" value="MGI"/>
</dbReference>
<dbReference type="GO" id="GO:0008016">
    <property type="term" value="P:regulation of heart contraction"/>
    <property type="evidence" value="ECO:0000315"/>
    <property type="project" value="UniProtKB"/>
</dbReference>
<dbReference type="GO" id="GO:1990911">
    <property type="term" value="P:response to psychosocial stress"/>
    <property type="evidence" value="ECO:0000315"/>
    <property type="project" value="UniProtKB"/>
</dbReference>
<dbReference type="CDD" id="cd15268">
    <property type="entry name" value="7tmB1_GLP1R"/>
    <property type="match status" value="1"/>
</dbReference>
<dbReference type="FunFam" id="1.20.1070.10:FF:000105">
    <property type="entry name" value="Glucagon like peptide 1 receptor"/>
    <property type="match status" value="1"/>
</dbReference>
<dbReference type="FunFam" id="4.10.1240.10:FF:000013">
    <property type="entry name" value="Glucagon like peptide 1 receptor"/>
    <property type="match status" value="1"/>
</dbReference>
<dbReference type="Gene3D" id="4.10.1240.10">
    <property type="entry name" value="GPCR, family 2, extracellular hormone receptor domain"/>
    <property type="match status" value="1"/>
</dbReference>
<dbReference type="Gene3D" id="1.20.1070.10">
    <property type="entry name" value="Rhodopsin 7-helix transmembrane proteins"/>
    <property type="match status" value="1"/>
</dbReference>
<dbReference type="InterPro" id="IPR047033">
    <property type="entry name" value="GLP1R_7TM"/>
</dbReference>
<dbReference type="InterPro" id="IPR050332">
    <property type="entry name" value="GPCR_2"/>
</dbReference>
<dbReference type="InterPro" id="IPR017981">
    <property type="entry name" value="GPCR_2-like_7TM"/>
</dbReference>
<dbReference type="InterPro" id="IPR036445">
    <property type="entry name" value="GPCR_2_extracell_dom_sf"/>
</dbReference>
<dbReference type="InterPro" id="IPR001879">
    <property type="entry name" value="GPCR_2_extracellular_dom"/>
</dbReference>
<dbReference type="InterPro" id="IPR003290">
    <property type="entry name" value="GPCR_2_GLP1/glucagon_rcpt"/>
</dbReference>
<dbReference type="InterPro" id="IPR003292">
    <property type="entry name" value="GPCR_2_GLP1_rcpt"/>
</dbReference>
<dbReference type="InterPro" id="IPR000832">
    <property type="entry name" value="GPCR_2_secretin-like"/>
</dbReference>
<dbReference type="InterPro" id="IPR017983">
    <property type="entry name" value="GPCR_2_secretin-like_CS"/>
</dbReference>
<dbReference type="PANTHER" id="PTHR45620:SF25">
    <property type="entry name" value="GLUCAGON-LIKE PEPTIDE 1 RECEPTOR"/>
    <property type="match status" value="1"/>
</dbReference>
<dbReference type="PANTHER" id="PTHR45620">
    <property type="entry name" value="PDF RECEPTOR-LIKE PROTEIN-RELATED"/>
    <property type="match status" value="1"/>
</dbReference>
<dbReference type="Pfam" id="PF00002">
    <property type="entry name" value="7tm_2"/>
    <property type="match status" value="1"/>
</dbReference>
<dbReference type="Pfam" id="PF02793">
    <property type="entry name" value="HRM"/>
    <property type="match status" value="1"/>
</dbReference>
<dbReference type="PRINTS" id="PR01353">
    <property type="entry name" value="GLUCAGNFAMLY"/>
</dbReference>
<dbReference type="PRINTS" id="PR01355">
    <property type="entry name" value="GLUCAGNLIKER"/>
</dbReference>
<dbReference type="PRINTS" id="PR00249">
    <property type="entry name" value="GPCRSECRETIN"/>
</dbReference>
<dbReference type="SMART" id="SM00008">
    <property type="entry name" value="HormR"/>
    <property type="match status" value="1"/>
</dbReference>
<dbReference type="SUPFAM" id="SSF81321">
    <property type="entry name" value="Family A G protein-coupled receptor-like"/>
    <property type="match status" value="1"/>
</dbReference>
<dbReference type="SUPFAM" id="SSF111418">
    <property type="entry name" value="Hormone receptor domain"/>
    <property type="match status" value="1"/>
</dbReference>
<dbReference type="PROSITE" id="PS00649">
    <property type="entry name" value="G_PROTEIN_RECEP_F2_1"/>
    <property type="match status" value="1"/>
</dbReference>
<dbReference type="PROSITE" id="PS00650">
    <property type="entry name" value="G_PROTEIN_RECEP_F2_2"/>
    <property type="match status" value="1"/>
</dbReference>
<dbReference type="PROSITE" id="PS50227">
    <property type="entry name" value="G_PROTEIN_RECEP_F2_3"/>
    <property type="match status" value="1"/>
</dbReference>
<dbReference type="PROSITE" id="PS50261">
    <property type="entry name" value="G_PROTEIN_RECEP_F2_4"/>
    <property type="match status" value="1"/>
</dbReference>
<evidence type="ECO:0000250" key="1">
    <source>
        <dbReference type="UniProtKB" id="P32301"/>
    </source>
</evidence>
<evidence type="ECO:0000250" key="2">
    <source>
        <dbReference type="UniProtKB" id="P43220"/>
    </source>
</evidence>
<evidence type="ECO:0000255" key="3"/>
<evidence type="ECO:0000269" key="4">
    <source>
    </source>
</evidence>
<evidence type="ECO:0000305" key="5"/>
<evidence type="ECO:0000305" key="6">
    <source>
    </source>
</evidence>
<proteinExistence type="evidence at protein level"/>
<organism>
    <name type="scientific">Mus musculus</name>
    <name type="common">Mouse</name>
    <dbReference type="NCBI Taxonomy" id="10090"/>
    <lineage>
        <taxon>Eukaryota</taxon>
        <taxon>Metazoa</taxon>
        <taxon>Chordata</taxon>
        <taxon>Craniata</taxon>
        <taxon>Vertebrata</taxon>
        <taxon>Euteleostomi</taxon>
        <taxon>Mammalia</taxon>
        <taxon>Eutheria</taxon>
        <taxon>Euarchontoglires</taxon>
        <taxon>Glires</taxon>
        <taxon>Rodentia</taxon>
        <taxon>Myomorpha</taxon>
        <taxon>Muroidea</taxon>
        <taxon>Muridae</taxon>
        <taxon>Murinae</taxon>
        <taxon>Mus</taxon>
        <taxon>Mus</taxon>
    </lineage>
</organism>
<protein>
    <recommendedName>
        <fullName>Glucagon-like peptide 1 receptor</fullName>
        <shortName>GLP-1 receptor</shortName>
        <shortName>GLP-1-R</shortName>
        <shortName>GLP-1R</shortName>
    </recommendedName>
</protein>
<comment type="function">
    <text evidence="2 4">G-protein coupled receptor for glucagon-like peptide 1 (GLP-1) (PubMed:9568699). Ligand binding triggers activation of a signaling cascade that leads to the activation of adenylyl cyclase and increased intracellular cAMP levels (By similarity). Plays a role in regulating insulin secretion in response to GLP-1 (PubMed:9568699).</text>
</comment>
<comment type="subunit">
    <text evidence="2">May form homodimers and heterodimers with GIPR.</text>
</comment>
<comment type="subcellular location">
    <subcellularLocation>
        <location evidence="6">Cell membrane</location>
        <topology evidence="2">Multi-pass membrane protein</topology>
    </subcellularLocation>
</comment>
<comment type="tissue specificity">
    <text evidence="4">Detected in pancreatic islets (at protein level). Detected in pancreatic islets and lungs.</text>
</comment>
<comment type="PTM">
    <text evidence="2">N-glycosylation enhances cell surface expression and lengthens receptor half-life by preventing degradation in the ER.</text>
</comment>
<comment type="miscellaneous">
    <text evidence="1">Selective recognition of glucagon-like peptide over glucagon is determined by residues located at the C-terminal end of the glucagon-like peptide.</text>
</comment>
<comment type="similarity">
    <text evidence="5">Belongs to the G-protein coupled receptor 2 family.</text>
</comment>
<comment type="sequence caution" evidence="5">
    <conflict type="frameshift">
        <sequence resource="EMBL-CDS" id="CAA04930"/>
    </conflict>
</comment>
<accession>O35659</accession>
<accession>Q1JQR8</accession>
<sequence length="463" mass="53028">MASTPSLLRLALLLLGAVGRAGPRPQGTTVSLSETVQKWREYRRQCQRFLTEAPLLATGLFCNRTFDDYACWPDGPPGSFVNVSCPWYLPWASSVLQGHVYRFCTAEGLWLHKDNSSLPWRDLSECEESKRGERNFPEEQLLSLYIIYTVGYALSFSALVIASAILVGFRHLHCTRNYIHLNLFASFILRALSVFIKDAALKWMYSTAAQQHQWDGLLSYQDSLGCRLVFLLMQYCVAANYYWLLVEGVYLYTLLAFSVFSEQRIFKLYLSIGWGVPLLFVIPWGIVKYLYEDEGCWTRNSNMNYWLIIRLPILFAIGVNFLIFIRVICIVVSKLKANLMCKTDIKCRLAKSTLTLIPLLGTHEVIFAFVMDEHARGTLRFIKLFTELSFTSFQGLMVAILYCFVNNEVQMEFRKCWERWRLEHLNIQRDCSMKPLKCPTSSVSSGATVGSSVYAATCQSSYS</sequence>
<feature type="signal peptide" evidence="3">
    <location>
        <begin position="1"/>
        <end position="21"/>
    </location>
</feature>
<feature type="chain" id="PRO_0000012836" description="Glucagon-like peptide 1 receptor">
    <location>
        <begin position="22"/>
        <end position="463"/>
    </location>
</feature>
<feature type="topological domain" description="Extracellular" evidence="5">
    <location>
        <begin position="22"/>
        <end position="139"/>
    </location>
</feature>
<feature type="transmembrane region" description="Helical; Name=1" evidence="2">
    <location>
        <begin position="140"/>
        <end position="164"/>
    </location>
</feature>
<feature type="topological domain" description="Cytoplasmic" evidence="5">
    <location>
        <begin position="165"/>
        <end position="175"/>
    </location>
</feature>
<feature type="transmembrane region" description="Helical; Name=2" evidence="2">
    <location>
        <begin position="176"/>
        <end position="201"/>
    </location>
</feature>
<feature type="topological domain" description="Extracellular" evidence="5">
    <location>
        <begin position="202"/>
        <end position="227"/>
    </location>
</feature>
<feature type="transmembrane region" description="Helical; Name=3" evidence="2">
    <location>
        <begin position="228"/>
        <end position="251"/>
    </location>
</feature>
<feature type="topological domain" description="Cytoplasmic" evidence="5">
    <location>
        <begin position="252"/>
        <end position="265"/>
    </location>
</feature>
<feature type="transmembrane region" description="Helical; Name=4" evidence="2">
    <location>
        <begin position="266"/>
        <end position="290"/>
    </location>
</feature>
<feature type="topological domain" description="Extracellular" evidence="5">
    <location>
        <begin position="291"/>
        <end position="305"/>
    </location>
</feature>
<feature type="transmembrane region" description="Helical; Name=5" evidence="2">
    <location>
        <begin position="306"/>
        <end position="328"/>
    </location>
</feature>
<feature type="topological domain" description="Cytoplasmic" evidence="5">
    <location>
        <begin position="329"/>
        <end position="348"/>
    </location>
</feature>
<feature type="transmembrane region" description="Helical; Name=6" evidence="2">
    <location>
        <begin position="349"/>
        <end position="370"/>
    </location>
</feature>
<feature type="topological domain" description="Extracellular" evidence="5">
    <location>
        <begin position="371"/>
        <end position="383"/>
    </location>
</feature>
<feature type="transmembrane region" description="Helical; Name=7" evidence="2">
    <location>
        <begin position="384"/>
        <end position="404"/>
    </location>
</feature>
<feature type="topological domain" description="Cytoplasmic" evidence="5">
    <location>
        <begin position="405"/>
        <end position="463"/>
    </location>
</feature>
<feature type="region of interest" description="Important for allosteric inhibitor binding" evidence="2">
    <location>
        <begin position="352"/>
        <end position="355"/>
    </location>
</feature>
<feature type="site" description="Interaction with the endogenous ligand GLP-1" evidence="2">
    <location>
        <position position="121"/>
    </location>
</feature>
<feature type="site" description="Interaction with the endogenous ligand GLP-1" evidence="2">
    <location>
        <position position="128"/>
    </location>
</feature>
<feature type="modified residue" description="ADP-ribosylcysteine" evidence="2">
    <location>
        <position position="341"/>
    </location>
</feature>
<feature type="modified residue" description="ADP-ribosylarginine" evidence="2">
    <location>
        <position position="348"/>
    </location>
</feature>
<feature type="glycosylation site" description="N-linked (GlcNAc...) asparagine" evidence="3">
    <location>
        <position position="63"/>
    </location>
</feature>
<feature type="glycosylation site" description="N-linked (GlcNAc...) asparagine" evidence="3">
    <location>
        <position position="82"/>
    </location>
</feature>
<feature type="glycosylation site" description="N-linked (GlcNAc...) asparagine" evidence="3">
    <location>
        <position position="115"/>
    </location>
</feature>
<feature type="disulfide bond" evidence="2">
    <location>
        <begin position="46"/>
        <end position="71"/>
    </location>
</feature>
<feature type="disulfide bond" evidence="2">
    <location>
        <begin position="62"/>
        <end position="104"/>
    </location>
</feature>
<feature type="disulfide bond" evidence="2">
    <location>
        <begin position="85"/>
        <end position="126"/>
    </location>
</feature>
<feature type="disulfide bond" evidence="2">
    <location>
        <begin position="226"/>
        <end position="296"/>
    </location>
</feature>
<gene>
    <name type="primary">Glp1r</name>
</gene>
<reference key="1">
    <citation type="journal article" date="1998" name="Diabetes">
        <title>Mouse pancreatic beta-cells exhibit preserved glucose competence after disruption of the glucagon-like peptide-1 receptor gene.</title>
        <authorList>
            <person name="Flamez D."/>
            <person name="van Breusegem A."/>
            <person name="Scrocchi L.A."/>
            <person name="Quartier E."/>
            <person name="Pipeleers D."/>
            <person name="Drucker D.J."/>
            <person name="Schuit F."/>
        </authorList>
    </citation>
    <scope>NUCLEOTIDE SEQUENCE [MRNA]</scope>
    <scope>FUNCTION</scope>
    <scope>SUBCELLULAR LOCATION</scope>
    <scope>TISSUE SPECIFICITY</scope>
    <source>
        <tissue>Lung</tissue>
    </source>
</reference>
<reference key="2">
    <citation type="journal article" date="2007" name="Am. J. Physiol.">
        <title>Quantitative trait loci for carbohydrate and total energy intake on mouse chromosome 17: congenic strain confirmation and candidate gene analyses (Glo1, Glp1r).</title>
        <authorList>
            <person name="Kumar K.G."/>
            <person name="Poole A.C."/>
            <person name="York B."/>
            <person name="Volaufova J."/>
            <person name="Zuberi A."/>
            <person name="Richards B.K."/>
        </authorList>
    </citation>
    <scope>NUCLEOTIDE SEQUENCE [MRNA]</scope>
    <source>
        <strain>C57BL/6J</strain>
        <tissue>Intestine</tissue>
    </source>
</reference>
<reference key="3">
    <citation type="submission" date="2003-05" db="EMBL/GenBank/DDBJ databases">
        <title>Identification and characterization of glucagon-like peptide-1 receptors in a pituitary ACTH-secreting cell line.</title>
        <authorList>
            <person name="Watanabe K."/>
            <person name="Doran A.C."/>
            <person name="Tibaduiza E.C."/>
            <person name="Chen C."/>
            <person name="Beinborn M."/>
        </authorList>
    </citation>
    <scope>NUCLEOTIDE SEQUENCE [MRNA]</scope>
    <source>
        <strain>LAF1</strain>
        <tissue>Pituitary</tissue>
    </source>
</reference>
<reference key="4">
    <citation type="journal article" date="2009" name="PLoS Biol.">
        <title>Lineage-specific biology revealed by a finished genome assembly of the mouse.</title>
        <authorList>
            <person name="Church D.M."/>
            <person name="Goodstadt L."/>
            <person name="Hillier L.W."/>
            <person name="Zody M.C."/>
            <person name="Goldstein S."/>
            <person name="She X."/>
            <person name="Bult C.J."/>
            <person name="Agarwala R."/>
            <person name="Cherry J.L."/>
            <person name="DiCuccio M."/>
            <person name="Hlavina W."/>
            <person name="Kapustin Y."/>
            <person name="Meric P."/>
            <person name="Maglott D."/>
            <person name="Birtle Z."/>
            <person name="Marques A.C."/>
            <person name="Graves T."/>
            <person name="Zhou S."/>
            <person name="Teague B."/>
            <person name="Potamousis K."/>
            <person name="Churas C."/>
            <person name="Place M."/>
            <person name="Herschleb J."/>
            <person name="Runnheim R."/>
            <person name="Forrest D."/>
            <person name="Amos-Landgraf J."/>
            <person name="Schwartz D.C."/>
            <person name="Cheng Z."/>
            <person name="Lindblad-Toh K."/>
            <person name="Eichler E.E."/>
            <person name="Ponting C.P."/>
        </authorList>
    </citation>
    <scope>NUCLEOTIDE SEQUENCE [LARGE SCALE GENOMIC DNA]</scope>
    <source>
        <strain>C57BL/6J</strain>
    </source>
</reference>
<reference key="5">
    <citation type="journal article" date="2004" name="Genome Res.">
        <title>The status, quality, and expansion of the NIH full-length cDNA project: the Mammalian Gene Collection (MGC).</title>
        <authorList>
            <consortium name="The MGC Project Team"/>
        </authorList>
    </citation>
    <scope>NUCLEOTIDE SEQUENCE [LARGE SCALE MRNA]</scope>
    <source>
        <tissue>Brain</tissue>
    </source>
</reference>
<keyword id="KW-0013">ADP-ribosylation</keyword>
<keyword id="KW-1003">Cell membrane</keyword>
<keyword id="KW-1015">Disulfide bond</keyword>
<keyword id="KW-0297">G-protein coupled receptor</keyword>
<keyword id="KW-0325">Glycoprotein</keyword>
<keyword id="KW-0472">Membrane</keyword>
<keyword id="KW-0675">Receptor</keyword>
<keyword id="KW-1185">Reference proteome</keyword>
<keyword id="KW-0732">Signal</keyword>
<keyword id="KW-0807">Transducer</keyword>
<keyword id="KW-0812">Transmembrane</keyword>
<keyword id="KW-1133">Transmembrane helix</keyword>
<name>GLP1R_MOUSE</name>